<name>RUVA_META1</name>
<reference key="1">
    <citation type="journal article" date="2008" name="Infect. Immun.">
        <title>Genome of Mycoplasma arthritidis.</title>
        <authorList>
            <person name="Dybvig K."/>
            <person name="Zuhua C."/>
            <person name="Lao P."/>
            <person name="Jordan D.S."/>
            <person name="French C.T."/>
            <person name="Tu A.H."/>
            <person name="Loraine A.E."/>
        </authorList>
    </citation>
    <scope>NUCLEOTIDE SEQUENCE [LARGE SCALE GENOMIC DNA]</scope>
    <source>
        <strain>158L3-1</strain>
    </source>
</reference>
<feature type="chain" id="PRO_1000195161" description="Holliday junction branch migration complex subunit RuvA">
    <location>
        <begin position="1"/>
        <end position="203"/>
    </location>
</feature>
<feature type="region of interest" description="Domain I" evidence="1">
    <location>
        <begin position="1"/>
        <end position="61"/>
    </location>
</feature>
<feature type="region of interest" description="Domain II" evidence="1">
    <location>
        <begin position="62"/>
        <end position="139"/>
    </location>
</feature>
<feature type="region of interest" description="Flexible linker" evidence="1">
    <location>
        <begin position="140"/>
        <end position="147"/>
    </location>
</feature>
<feature type="region of interest" description="Domain III" evidence="1">
    <location>
        <begin position="147"/>
        <end position="203"/>
    </location>
</feature>
<comment type="function">
    <text evidence="1">The RuvA-RuvB-RuvC complex processes Holliday junction (HJ) DNA during genetic recombination and DNA repair, while the RuvA-RuvB complex plays an important role in the rescue of blocked DNA replication forks via replication fork reversal (RFR). RuvA specifically binds to HJ cruciform DNA, conferring on it an open structure. The RuvB hexamer acts as an ATP-dependent pump, pulling dsDNA into and through the RuvAB complex. HJ branch migration allows RuvC to scan DNA until it finds its consensus sequence, where it cleaves and resolves the cruciform DNA.</text>
</comment>
<comment type="subunit">
    <text evidence="1">Homotetramer. Forms an RuvA(8)-RuvB(12)-Holliday junction (HJ) complex. HJ DNA is sandwiched between 2 RuvA tetramers; dsDNA enters through RuvA and exits via RuvB. An RuvB hexamer assembles on each DNA strand where it exits the tetramer. Each RuvB hexamer is contacted by two RuvA subunits (via domain III) on 2 adjacent RuvB subunits; this complex drives branch migration. In the full resolvosome a probable DNA-RuvA(4)-RuvB(12)-RuvC(2) complex forms which resolves the HJ.</text>
</comment>
<comment type="subcellular location">
    <subcellularLocation>
        <location evidence="1">Cytoplasm</location>
    </subcellularLocation>
</comment>
<comment type="domain">
    <text evidence="1">Has three domains with a flexible linker between the domains II and III and assumes an 'L' shape. Domain III is highly mobile and contacts RuvB.</text>
</comment>
<comment type="similarity">
    <text evidence="1">Belongs to the RuvA family.</text>
</comment>
<sequence>MIIYKYGKIMHVNTNYLILDHNGEGDLIYAPNISRFKKDELRKIFISQIENEYTKVTYGFDNFKELVIFEDLIEIQGLGPKTAISILNIGWENVINYVATANKGALGKIPYVSSKIANAIIFSYQDKYAKFMKKLTSDEAAKIKVPASSENENKFLDTMKMLGFKQQQIKFALDKIELNDDIETCVENAIKLISQQQHETSRV</sequence>
<proteinExistence type="inferred from homology"/>
<accession>B3PMK3</accession>
<protein>
    <recommendedName>
        <fullName evidence="1">Holliday junction branch migration complex subunit RuvA</fullName>
    </recommendedName>
</protein>
<dbReference type="EMBL" id="CP001047">
    <property type="protein sequence ID" value="ACF07255.1"/>
    <property type="molecule type" value="Genomic_DNA"/>
</dbReference>
<dbReference type="RefSeq" id="WP_012498212.1">
    <property type="nucleotide sequence ID" value="NC_011025.1"/>
</dbReference>
<dbReference type="SMR" id="B3PMK3"/>
<dbReference type="STRING" id="243272.MARTH_orf388"/>
<dbReference type="KEGG" id="mat:MARTH_orf388"/>
<dbReference type="eggNOG" id="COG0632">
    <property type="taxonomic scope" value="Bacteria"/>
</dbReference>
<dbReference type="HOGENOM" id="CLU_087936_1_1_14"/>
<dbReference type="Proteomes" id="UP000008812">
    <property type="component" value="Chromosome"/>
</dbReference>
<dbReference type="GO" id="GO:0005737">
    <property type="term" value="C:cytoplasm"/>
    <property type="evidence" value="ECO:0007669"/>
    <property type="project" value="UniProtKB-SubCell"/>
</dbReference>
<dbReference type="GO" id="GO:0048476">
    <property type="term" value="C:Holliday junction resolvase complex"/>
    <property type="evidence" value="ECO:0007669"/>
    <property type="project" value="UniProtKB-UniRule"/>
</dbReference>
<dbReference type="GO" id="GO:0005524">
    <property type="term" value="F:ATP binding"/>
    <property type="evidence" value="ECO:0007669"/>
    <property type="project" value="InterPro"/>
</dbReference>
<dbReference type="GO" id="GO:0000400">
    <property type="term" value="F:four-way junction DNA binding"/>
    <property type="evidence" value="ECO:0007669"/>
    <property type="project" value="UniProtKB-UniRule"/>
</dbReference>
<dbReference type="GO" id="GO:0009378">
    <property type="term" value="F:four-way junction helicase activity"/>
    <property type="evidence" value="ECO:0007669"/>
    <property type="project" value="InterPro"/>
</dbReference>
<dbReference type="GO" id="GO:0006310">
    <property type="term" value="P:DNA recombination"/>
    <property type="evidence" value="ECO:0007669"/>
    <property type="project" value="UniProtKB-UniRule"/>
</dbReference>
<dbReference type="GO" id="GO:0006281">
    <property type="term" value="P:DNA repair"/>
    <property type="evidence" value="ECO:0007669"/>
    <property type="project" value="UniProtKB-UniRule"/>
</dbReference>
<dbReference type="Gene3D" id="1.10.150.20">
    <property type="entry name" value="5' to 3' exonuclease, C-terminal subdomain"/>
    <property type="match status" value="1"/>
</dbReference>
<dbReference type="HAMAP" id="MF_00031">
    <property type="entry name" value="DNA_HJ_migration_RuvA"/>
    <property type="match status" value="1"/>
</dbReference>
<dbReference type="InterPro" id="IPR013849">
    <property type="entry name" value="DNA_helicase_Holl-junc_RuvA_I"/>
</dbReference>
<dbReference type="InterPro" id="IPR003583">
    <property type="entry name" value="Hlx-hairpin-Hlx_DNA-bd_motif"/>
</dbReference>
<dbReference type="InterPro" id="IPR000085">
    <property type="entry name" value="RuvA"/>
</dbReference>
<dbReference type="InterPro" id="IPR010994">
    <property type="entry name" value="RuvA_2-like"/>
</dbReference>
<dbReference type="NCBIfam" id="TIGR00084">
    <property type="entry name" value="ruvA"/>
    <property type="match status" value="1"/>
</dbReference>
<dbReference type="Pfam" id="PF14520">
    <property type="entry name" value="HHH_5"/>
    <property type="match status" value="1"/>
</dbReference>
<dbReference type="Pfam" id="PF01330">
    <property type="entry name" value="RuvA_N"/>
    <property type="match status" value="1"/>
</dbReference>
<dbReference type="SMART" id="SM00278">
    <property type="entry name" value="HhH1"/>
    <property type="match status" value="2"/>
</dbReference>
<dbReference type="SUPFAM" id="SSF47781">
    <property type="entry name" value="RuvA domain 2-like"/>
    <property type="match status" value="1"/>
</dbReference>
<gene>
    <name evidence="1" type="primary">ruvA</name>
    <name type="ordered locus">MARTH_orf388</name>
</gene>
<organism>
    <name type="scientific">Metamycoplasma arthritidis (strain 158L3-1)</name>
    <name type="common">Mycoplasma arthritidis</name>
    <dbReference type="NCBI Taxonomy" id="243272"/>
    <lineage>
        <taxon>Bacteria</taxon>
        <taxon>Bacillati</taxon>
        <taxon>Mycoplasmatota</taxon>
        <taxon>Mycoplasmoidales</taxon>
        <taxon>Metamycoplasmataceae</taxon>
        <taxon>Metamycoplasma</taxon>
    </lineage>
</organism>
<keyword id="KW-0963">Cytoplasm</keyword>
<keyword id="KW-0227">DNA damage</keyword>
<keyword id="KW-0233">DNA recombination</keyword>
<keyword id="KW-0234">DNA repair</keyword>
<keyword id="KW-0238">DNA-binding</keyword>
<keyword id="KW-1185">Reference proteome</keyword>
<evidence type="ECO:0000255" key="1">
    <source>
        <dbReference type="HAMAP-Rule" id="MF_00031"/>
    </source>
</evidence>